<keyword id="KW-0175">Coiled coil</keyword>
<keyword id="KW-0507">mRNA processing</keyword>
<keyword id="KW-0508">mRNA splicing</keyword>
<keyword id="KW-0539">Nucleus</keyword>
<keyword id="KW-1185">Reference proteome</keyword>
<keyword id="KW-0747">Spliceosome</keyword>
<name>SYF2_DEBHA</name>
<reference key="1">
    <citation type="journal article" date="2004" name="Nature">
        <title>Genome evolution in yeasts.</title>
        <authorList>
            <person name="Dujon B."/>
            <person name="Sherman D."/>
            <person name="Fischer G."/>
            <person name="Durrens P."/>
            <person name="Casaregola S."/>
            <person name="Lafontaine I."/>
            <person name="de Montigny J."/>
            <person name="Marck C."/>
            <person name="Neuveglise C."/>
            <person name="Talla E."/>
            <person name="Goffard N."/>
            <person name="Frangeul L."/>
            <person name="Aigle M."/>
            <person name="Anthouard V."/>
            <person name="Babour A."/>
            <person name="Barbe V."/>
            <person name="Barnay S."/>
            <person name="Blanchin S."/>
            <person name="Beckerich J.-M."/>
            <person name="Beyne E."/>
            <person name="Bleykasten C."/>
            <person name="Boisrame A."/>
            <person name="Boyer J."/>
            <person name="Cattolico L."/>
            <person name="Confanioleri F."/>
            <person name="de Daruvar A."/>
            <person name="Despons L."/>
            <person name="Fabre E."/>
            <person name="Fairhead C."/>
            <person name="Ferry-Dumazet H."/>
            <person name="Groppi A."/>
            <person name="Hantraye F."/>
            <person name="Hennequin C."/>
            <person name="Jauniaux N."/>
            <person name="Joyet P."/>
            <person name="Kachouri R."/>
            <person name="Kerrest A."/>
            <person name="Koszul R."/>
            <person name="Lemaire M."/>
            <person name="Lesur I."/>
            <person name="Ma L."/>
            <person name="Muller H."/>
            <person name="Nicaud J.-M."/>
            <person name="Nikolski M."/>
            <person name="Oztas S."/>
            <person name="Ozier-Kalogeropoulos O."/>
            <person name="Pellenz S."/>
            <person name="Potier S."/>
            <person name="Richard G.-F."/>
            <person name="Straub M.-L."/>
            <person name="Suleau A."/>
            <person name="Swennen D."/>
            <person name="Tekaia F."/>
            <person name="Wesolowski-Louvel M."/>
            <person name="Westhof E."/>
            <person name="Wirth B."/>
            <person name="Zeniou-Meyer M."/>
            <person name="Zivanovic Y."/>
            <person name="Bolotin-Fukuhara M."/>
            <person name="Thierry A."/>
            <person name="Bouchier C."/>
            <person name="Caudron B."/>
            <person name="Scarpelli C."/>
            <person name="Gaillardin C."/>
            <person name="Weissenbach J."/>
            <person name="Wincker P."/>
            <person name="Souciet J.-L."/>
        </authorList>
    </citation>
    <scope>NUCLEOTIDE SEQUENCE [LARGE SCALE GENOMIC DNA]</scope>
    <source>
        <strain>ATCC 36239 / CBS 767 / BCRC 21394 / JCM 1990 / NBRC 0083 / IGC 2968</strain>
    </source>
</reference>
<gene>
    <name type="primary">SYF2</name>
    <name type="ordered locus">DEHA2C03366g</name>
</gene>
<proteinExistence type="inferred from homology"/>
<sequence>MSSEESGEVGVPKNGNQDDDSGSTRVSVSDRLAKLQRLKRKKQESEKLNKQELFQDYKQQKLKSIEYKKIEQKKLNAELEQEKLDSIEKGEDFERKQNWDWTIEDCEKWEKKTKQKGRNQKSGFQNFNKMAEQAYNKELSNLKVDKETYDQQKNAINKNKSGNQSQMSKILPVSSKPSAADTNRLVRNIEEANNRRMKRRRNKDDENDVNSYINDKNKQFNLKLNRQYDES</sequence>
<evidence type="ECO:0000250" key="1"/>
<evidence type="ECO:0000255" key="2"/>
<evidence type="ECO:0000256" key="3">
    <source>
        <dbReference type="SAM" id="MobiDB-lite"/>
    </source>
</evidence>
<evidence type="ECO:0000305" key="4"/>
<protein>
    <recommendedName>
        <fullName>Pre-mRNA-splicing factor SYF2</fullName>
    </recommendedName>
</protein>
<accession>Q6BVE0</accession>
<organism>
    <name type="scientific">Debaryomyces hansenii (strain ATCC 36239 / CBS 767 / BCRC 21394 / JCM 1990 / NBRC 0083 / IGC 2968)</name>
    <name type="common">Yeast</name>
    <name type="synonym">Torulaspora hansenii</name>
    <dbReference type="NCBI Taxonomy" id="284592"/>
    <lineage>
        <taxon>Eukaryota</taxon>
        <taxon>Fungi</taxon>
        <taxon>Dikarya</taxon>
        <taxon>Ascomycota</taxon>
        <taxon>Saccharomycotina</taxon>
        <taxon>Pichiomycetes</taxon>
        <taxon>Debaryomycetaceae</taxon>
        <taxon>Debaryomyces</taxon>
    </lineage>
</organism>
<dbReference type="EMBL" id="CR382135">
    <property type="protein sequence ID" value="CAG85874.2"/>
    <property type="molecule type" value="Genomic_DNA"/>
</dbReference>
<dbReference type="RefSeq" id="XP_457829.2">
    <property type="nucleotide sequence ID" value="XM_457829.1"/>
</dbReference>
<dbReference type="SMR" id="Q6BVE0"/>
<dbReference type="FunCoup" id="Q6BVE0">
    <property type="interactions" value="158"/>
</dbReference>
<dbReference type="STRING" id="284592.Q6BVE0"/>
<dbReference type="GeneID" id="2900022"/>
<dbReference type="KEGG" id="dha:DEHA2C03366g"/>
<dbReference type="VEuPathDB" id="FungiDB:DEHA2C03366g"/>
<dbReference type="eggNOG" id="KOG2609">
    <property type="taxonomic scope" value="Eukaryota"/>
</dbReference>
<dbReference type="HOGENOM" id="CLU_051065_4_0_1"/>
<dbReference type="InParanoid" id="Q6BVE0"/>
<dbReference type="OMA" id="AYSHDHK"/>
<dbReference type="OrthoDB" id="199717at2759"/>
<dbReference type="Proteomes" id="UP000000599">
    <property type="component" value="Chromosome C"/>
</dbReference>
<dbReference type="GO" id="GO:0071013">
    <property type="term" value="C:catalytic step 2 spliceosome"/>
    <property type="evidence" value="ECO:0007669"/>
    <property type="project" value="TreeGrafter"/>
</dbReference>
<dbReference type="GO" id="GO:0071014">
    <property type="term" value="C:post-mRNA release spliceosomal complex"/>
    <property type="evidence" value="ECO:0007669"/>
    <property type="project" value="TreeGrafter"/>
</dbReference>
<dbReference type="GO" id="GO:0000974">
    <property type="term" value="C:Prp19 complex"/>
    <property type="evidence" value="ECO:0007669"/>
    <property type="project" value="TreeGrafter"/>
</dbReference>
<dbReference type="GO" id="GO:0006397">
    <property type="term" value="P:mRNA processing"/>
    <property type="evidence" value="ECO:0007669"/>
    <property type="project" value="UniProtKB-KW"/>
</dbReference>
<dbReference type="GO" id="GO:0008380">
    <property type="term" value="P:RNA splicing"/>
    <property type="evidence" value="ECO:0007669"/>
    <property type="project" value="UniProtKB-KW"/>
</dbReference>
<dbReference type="InterPro" id="IPR013260">
    <property type="entry name" value="mRNA_splic_SYF2"/>
</dbReference>
<dbReference type="PANTHER" id="PTHR13264">
    <property type="entry name" value="GCIP-INTERACTING PROTEIN P29"/>
    <property type="match status" value="1"/>
</dbReference>
<dbReference type="PANTHER" id="PTHR13264:SF5">
    <property type="entry name" value="PRE-MRNA-SPLICING FACTOR SYF2"/>
    <property type="match status" value="1"/>
</dbReference>
<dbReference type="Pfam" id="PF08231">
    <property type="entry name" value="SYF2"/>
    <property type="match status" value="1"/>
</dbReference>
<comment type="function">
    <text evidence="1">Involved in pre-mRNA splicing.</text>
</comment>
<comment type="subunit">
    <text evidence="1">Associated with the spliceosome.</text>
</comment>
<comment type="subcellular location">
    <subcellularLocation>
        <location evidence="1">Nucleus</location>
    </subcellularLocation>
</comment>
<comment type="similarity">
    <text evidence="4">Belongs to the SYF2 family.</text>
</comment>
<feature type="chain" id="PRO_0000072374" description="Pre-mRNA-splicing factor SYF2">
    <location>
        <begin position="1"/>
        <end position="231"/>
    </location>
</feature>
<feature type="region of interest" description="Disordered" evidence="3">
    <location>
        <begin position="1"/>
        <end position="30"/>
    </location>
</feature>
<feature type="region of interest" description="Disordered" evidence="3">
    <location>
        <begin position="144"/>
        <end position="231"/>
    </location>
</feature>
<feature type="coiled-coil region" evidence="2">
    <location>
        <begin position="30"/>
        <end position="89"/>
    </location>
</feature>
<feature type="compositionally biased region" description="Polar residues" evidence="3">
    <location>
        <begin position="151"/>
        <end position="168"/>
    </location>
</feature>
<feature type="compositionally biased region" description="Polar residues" evidence="3">
    <location>
        <begin position="211"/>
        <end position="224"/>
    </location>
</feature>